<gene>
    <name type="primary">YFH7</name>
    <name type="ORF">Kpol_467p9</name>
</gene>
<reference key="1">
    <citation type="journal article" date="2007" name="Proc. Natl. Acad. Sci. U.S.A.">
        <title>Independent sorting-out of thousands of duplicated gene pairs in two yeast species descended from a whole-genome duplication.</title>
        <authorList>
            <person name="Scannell D.R."/>
            <person name="Frank A.C."/>
            <person name="Conant G.C."/>
            <person name="Byrne K.P."/>
            <person name="Woolfit M."/>
            <person name="Wolfe K.H."/>
        </authorList>
    </citation>
    <scope>NUCLEOTIDE SEQUENCE [LARGE SCALE GENOMIC DNA]</scope>
    <source>
        <strain>ATCC 22028 / DSM 70294 / BCRC 21397 / CBS 2163 / NBRC 10782 / NRRL Y-8283 / UCD 57-17</strain>
    </source>
</reference>
<dbReference type="EC" id="2.7.1.-"/>
<dbReference type="EMBL" id="DS480457">
    <property type="protein sequence ID" value="EDO15497.1"/>
    <property type="molecule type" value="Genomic_DNA"/>
</dbReference>
<dbReference type="RefSeq" id="XP_001643355.1">
    <property type="nucleotide sequence ID" value="XM_001643305.1"/>
</dbReference>
<dbReference type="SMR" id="A7TQF3"/>
<dbReference type="FunCoup" id="A7TQF3">
    <property type="interactions" value="21"/>
</dbReference>
<dbReference type="STRING" id="436907.A7TQF3"/>
<dbReference type="GeneID" id="5543570"/>
<dbReference type="KEGG" id="vpo:Kpol_467p9"/>
<dbReference type="eggNOG" id="KOG2702">
    <property type="taxonomic scope" value="Eukaryota"/>
</dbReference>
<dbReference type="HOGENOM" id="CLU_067202_1_0_1"/>
<dbReference type="InParanoid" id="A7TQF3"/>
<dbReference type="OMA" id="LYDQENW"/>
<dbReference type="OrthoDB" id="6362633at2759"/>
<dbReference type="PhylomeDB" id="A7TQF3"/>
<dbReference type="Proteomes" id="UP000000267">
    <property type="component" value="Unassembled WGS sequence"/>
</dbReference>
<dbReference type="GO" id="GO:0005524">
    <property type="term" value="F:ATP binding"/>
    <property type="evidence" value="ECO:0007669"/>
    <property type="project" value="UniProtKB-KW"/>
</dbReference>
<dbReference type="GO" id="GO:0016887">
    <property type="term" value="F:ATP hydrolysis activity"/>
    <property type="evidence" value="ECO:0007669"/>
    <property type="project" value="EnsemblFungi"/>
</dbReference>
<dbReference type="GO" id="GO:0016301">
    <property type="term" value="F:kinase activity"/>
    <property type="evidence" value="ECO:0007669"/>
    <property type="project" value="UniProtKB-KW"/>
</dbReference>
<dbReference type="Gene3D" id="3.40.50.300">
    <property type="entry name" value="P-loop containing nucleotide triphosphate hydrolases"/>
    <property type="match status" value="1"/>
</dbReference>
<dbReference type="InterPro" id="IPR027417">
    <property type="entry name" value="P-loop_NTPase"/>
</dbReference>
<dbReference type="PANTHER" id="PTHR10285">
    <property type="entry name" value="URIDINE KINASE"/>
    <property type="match status" value="1"/>
</dbReference>
<dbReference type="SUPFAM" id="SSF52540">
    <property type="entry name" value="P-loop containing nucleoside triphosphate hydrolases"/>
    <property type="match status" value="2"/>
</dbReference>
<accession>A7TQF3</accession>
<feature type="chain" id="PRO_0000404221" description="ATP-dependent kinase YFH7">
    <location>
        <begin position="1"/>
        <end position="359"/>
    </location>
</feature>
<feature type="binding site" evidence="1">
    <location>
        <begin position="31"/>
        <end position="39"/>
    </location>
    <ligand>
        <name>ATP</name>
        <dbReference type="ChEBI" id="CHEBI:30616"/>
    </ligand>
</feature>
<evidence type="ECO:0000250" key="1"/>
<evidence type="ECO:0000305" key="2"/>
<comment type="function">
    <text evidence="1">ATP-dependent kinase that could be involved in endoplasmic reticulum membrane assembly.</text>
</comment>
<comment type="similarity">
    <text evidence="2">Belongs to the YFH7 family.</text>
</comment>
<keyword id="KW-0067">ATP-binding</keyword>
<keyword id="KW-0418">Kinase</keyword>
<keyword id="KW-0547">Nucleotide-binding</keyword>
<keyword id="KW-1185">Reference proteome</keyword>
<keyword id="KW-0808">Transferase</keyword>
<sequence length="359" mass="40477">MFDIDGLVSDSLKLLADRVDKNYRISLVIVGPPGSGKSTIANELCERLNSMFHEYLKEHGGNIEISGVSEPLPVDITEPIREVSRNIVEYMTSNDGILPQSVEDLDFECVKFQDDGRDNGNVNGNVKVIGRGGLPNAIEVSPYHDLSKPKEKCDVNIAQIIPMDGFHLTRKCLDNFKDPVNAHRRRGSPSTFDSNNFLQLCKLLAETSNTKIPLSRFQNSDNDDVDAVWEKLAKTFTSDVQDIYIPGFDHSLKDPTSNQYCINGFTRIMIFEGLYLLYDQENWSKIYQVLSGTDALLIWNIDIDEAVIQDRVAKRHLNSGLVNTFEEGIDKFQVNDLLNARSIRQHTLDVKDVVTIHND</sequence>
<protein>
    <recommendedName>
        <fullName>ATP-dependent kinase YFH7</fullName>
        <ecNumber>2.7.1.-</ecNumber>
    </recommendedName>
</protein>
<name>YFH7_VANPO</name>
<proteinExistence type="inferred from homology"/>
<organism>
    <name type="scientific">Vanderwaltozyma polyspora (strain ATCC 22028 / DSM 70294 / BCRC 21397 / CBS 2163 / NBRC 10782 / NRRL Y-8283 / UCD 57-17)</name>
    <name type="common">Kluyveromyces polysporus</name>
    <dbReference type="NCBI Taxonomy" id="436907"/>
    <lineage>
        <taxon>Eukaryota</taxon>
        <taxon>Fungi</taxon>
        <taxon>Dikarya</taxon>
        <taxon>Ascomycota</taxon>
        <taxon>Saccharomycotina</taxon>
        <taxon>Saccharomycetes</taxon>
        <taxon>Saccharomycetales</taxon>
        <taxon>Saccharomycetaceae</taxon>
        <taxon>Vanderwaltozyma</taxon>
    </lineage>
</organism>